<dbReference type="EC" id="2.1.1.-"/>
<dbReference type="EMBL" id="AL022486">
    <property type="protein sequence ID" value="CAA18551.1"/>
    <property type="molecule type" value="Genomic_DNA"/>
</dbReference>
<dbReference type="EMBL" id="AL583926">
    <property type="protein sequence ID" value="CAC32116.1"/>
    <property type="molecule type" value="Genomic_DNA"/>
</dbReference>
<dbReference type="PIR" id="T44866">
    <property type="entry name" value="T44866"/>
</dbReference>
<dbReference type="RefSeq" id="NP_302653.1">
    <property type="nucleotide sequence ID" value="NC_002677.1"/>
</dbReference>
<dbReference type="RefSeq" id="WP_010908972.1">
    <property type="nucleotide sequence ID" value="NC_002677.1"/>
</dbReference>
<dbReference type="SMR" id="O69492"/>
<dbReference type="STRING" id="272631.gene:17576450"/>
<dbReference type="KEGG" id="mle:ML2584"/>
<dbReference type="PATRIC" id="fig|272631.5.peg.4967"/>
<dbReference type="Leproma" id="ML2584"/>
<dbReference type="eggNOG" id="COG0500">
    <property type="taxonomic scope" value="Bacteria"/>
</dbReference>
<dbReference type="HOGENOM" id="CLU_073035_0_0_11"/>
<dbReference type="OrthoDB" id="3206826at2"/>
<dbReference type="Proteomes" id="UP000000806">
    <property type="component" value="Chromosome"/>
</dbReference>
<dbReference type="GO" id="GO:0008757">
    <property type="term" value="F:S-adenosylmethionine-dependent methyltransferase activity"/>
    <property type="evidence" value="ECO:0007669"/>
    <property type="project" value="InterPro"/>
</dbReference>
<dbReference type="GO" id="GO:0032259">
    <property type="term" value="P:methylation"/>
    <property type="evidence" value="ECO:0007669"/>
    <property type="project" value="UniProtKB-KW"/>
</dbReference>
<dbReference type="CDD" id="cd02440">
    <property type="entry name" value="AdoMet_MTases"/>
    <property type="match status" value="1"/>
</dbReference>
<dbReference type="Gene3D" id="3.40.50.150">
    <property type="entry name" value="Vaccinia Virus protein VP39"/>
    <property type="match status" value="1"/>
</dbReference>
<dbReference type="InterPro" id="IPR013216">
    <property type="entry name" value="Methyltransf_11"/>
</dbReference>
<dbReference type="InterPro" id="IPR029063">
    <property type="entry name" value="SAM-dependent_MTases_sf"/>
</dbReference>
<dbReference type="PANTHER" id="PTHR43591">
    <property type="entry name" value="METHYLTRANSFERASE"/>
    <property type="match status" value="1"/>
</dbReference>
<dbReference type="Pfam" id="PF08241">
    <property type="entry name" value="Methyltransf_11"/>
    <property type="match status" value="1"/>
</dbReference>
<dbReference type="SUPFAM" id="SSF53335">
    <property type="entry name" value="S-adenosyl-L-methionine-dependent methyltransferases"/>
    <property type="match status" value="1"/>
</dbReference>
<protein>
    <recommendedName>
        <fullName>Uncharacterized methyltransferase ML2584</fullName>
        <ecNumber>2.1.1.-</ecNumber>
    </recommendedName>
</protein>
<gene>
    <name type="ordered locus">ML2584</name>
    <name type="ORF">MLCB1883.02c</name>
</gene>
<name>Y2584_MYCLE</name>
<comment type="similarity">
    <text evidence="1">Belongs to the methyltransferase superfamily.</text>
</comment>
<organism>
    <name type="scientific">Mycobacterium leprae (strain TN)</name>
    <dbReference type="NCBI Taxonomy" id="272631"/>
    <lineage>
        <taxon>Bacteria</taxon>
        <taxon>Bacillati</taxon>
        <taxon>Actinomycetota</taxon>
        <taxon>Actinomycetes</taxon>
        <taxon>Mycobacteriales</taxon>
        <taxon>Mycobacteriaceae</taxon>
        <taxon>Mycobacterium</taxon>
    </lineage>
</organism>
<accession>O69492</accession>
<sequence>MDTRRRVWPVAIITPHVTDVFAQRATLTRSLQLLSEFRYEQPYPARFYRALAADTVAMVGDLWLSTHGAPPVGRILLDVGSGSGYFAAAFADAGVRYIGVEPDPREMHAAGPALVPKAGAFVRASGMALPFADDAVDICLSSNVAEHVPQPWQLGNEMLRVTKPGGLVVLSYTIWLGPFGGHEMGLTHYLGGARAATRYVRKHGHRAKNDYGSSLFPVSAADGLNWAASTGVAVAAFPRYHPRWAWWLTSVPVLREFVVSNLVLVLRPR</sequence>
<evidence type="ECO:0000305" key="1"/>
<reference key="1">
    <citation type="journal article" date="2001" name="Nature">
        <title>Massive gene decay in the leprosy bacillus.</title>
        <authorList>
            <person name="Cole S.T."/>
            <person name="Eiglmeier K."/>
            <person name="Parkhill J."/>
            <person name="James K.D."/>
            <person name="Thomson N.R."/>
            <person name="Wheeler P.R."/>
            <person name="Honore N."/>
            <person name="Garnier T."/>
            <person name="Churcher C.M."/>
            <person name="Harris D.E."/>
            <person name="Mungall K.L."/>
            <person name="Basham D."/>
            <person name="Brown D."/>
            <person name="Chillingworth T."/>
            <person name="Connor R."/>
            <person name="Davies R.M."/>
            <person name="Devlin K."/>
            <person name="Duthoy S."/>
            <person name="Feltwell T."/>
            <person name="Fraser A."/>
            <person name="Hamlin N."/>
            <person name="Holroyd S."/>
            <person name="Hornsby T."/>
            <person name="Jagels K."/>
            <person name="Lacroix C."/>
            <person name="Maclean J."/>
            <person name="Moule S."/>
            <person name="Murphy L.D."/>
            <person name="Oliver K."/>
            <person name="Quail M.A."/>
            <person name="Rajandream M.A."/>
            <person name="Rutherford K.M."/>
            <person name="Rutter S."/>
            <person name="Seeger K."/>
            <person name="Simon S."/>
            <person name="Simmonds M."/>
            <person name="Skelton J."/>
            <person name="Squares R."/>
            <person name="Squares S."/>
            <person name="Stevens K."/>
            <person name="Taylor K."/>
            <person name="Whitehead S."/>
            <person name="Woodward J.R."/>
            <person name="Barrell B.G."/>
        </authorList>
    </citation>
    <scope>NUCLEOTIDE SEQUENCE [LARGE SCALE GENOMIC DNA]</scope>
    <source>
        <strain>TN</strain>
    </source>
</reference>
<keyword id="KW-0489">Methyltransferase</keyword>
<keyword id="KW-1185">Reference proteome</keyword>
<keyword id="KW-0808">Transferase</keyword>
<proteinExistence type="inferred from homology"/>
<feature type="chain" id="PRO_0000380601" description="Uncharacterized methyltransferase ML2584">
    <location>
        <begin position="1"/>
        <end position="269"/>
    </location>
</feature>